<accession>Q97Q15</accession>
<proteinExistence type="inferred from homology"/>
<sequence length="342" mass="38380">MNTADFDFHLPEELIAQTPLEKRDASKLLIVNRETGEMQDKHFHSIIDMLEPGDALVMNDTRVLPARLYGQKVETGGHVELLLLKNTSGDEWEVLAKPAKRLKVGTRISFGDGRLSAVVTEELTHGGRIVRFEYQGIFLEVLESLGEMPLPPYIHEKLDDRERYQTVYAKESGSAAAPTAGLHFTKELLAEIQAKGVHLVYLTLHVGLGTFRPVSVDNLDEHEMHSEFYQLSEEAAATLRSVKKNGGRVIAVGTTSIRTLETIGSKFDGQIQADSGWTNIFIKPGYEWKVVDAFSTNFHLPKSTLVMLVSAFAGRELVLDAYHHSIQEHYRFFSFGDAMFIY</sequence>
<comment type="function">
    <text evidence="1">Transfers and isomerizes the ribose moiety from AdoMet to the 7-aminomethyl group of 7-deazaguanine (preQ1-tRNA) to give epoxyqueuosine (oQ-tRNA).</text>
</comment>
<comment type="catalytic activity">
    <reaction evidence="1">
        <text>7-aminomethyl-7-carbaguanosine(34) in tRNA + S-adenosyl-L-methionine = epoxyqueuosine(34) in tRNA + adenine + L-methionine + 2 H(+)</text>
        <dbReference type="Rhea" id="RHEA:32155"/>
        <dbReference type="Rhea" id="RHEA-COMP:10342"/>
        <dbReference type="Rhea" id="RHEA-COMP:18582"/>
        <dbReference type="ChEBI" id="CHEBI:15378"/>
        <dbReference type="ChEBI" id="CHEBI:16708"/>
        <dbReference type="ChEBI" id="CHEBI:57844"/>
        <dbReference type="ChEBI" id="CHEBI:59789"/>
        <dbReference type="ChEBI" id="CHEBI:82833"/>
        <dbReference type="ChEBI" id="CHEBI:194443"/>
        <dbReference type="EC" id="2.4.99.17"/>
    </reaction>
</comment>
<comment type="pathway">
    <text evidence="1">tRNA modification; tRNA-queuosine biosynthesis.</text>
</comment>
<comment type="subunit">
    <text evidence="1">Monomer.</text>
</comment>
<comment type="subcellular location">
    <subcellularLocation>
        <location evidence="1">Cytoplasm</location>
    </subcellularLocation>
</comment>
<comment type="similarity">
    <text evidence="1">Belongs to the QueA family.</text>
</comment>
<gene>
    <name evidence="1" type="primary">queA</name>
    <name type="ordered locus">SP_1416</name>
</gene>
<dbReference type="EC" id="2.4.99.17" evidence="1"/>
<dbReference type="EMBL" id="AE005672">
    <property type="protein sequence ID" value="AAK75514.1"/>
    <property type="molecule type" value="Genomic_DNA"/>
</dbReference>
<dbReference type="PIR" id="A95165">
    <property type="entry name" value="A95165"/>
</dbReference>
<dbReference type="RefSeq" id="WP_001090154.1">
    <property type="nucleotide sequence ID" value="NZ_CP155539.1"/>
</dbReference>
<dbReference type="SMR" id="Q97Q15"/>
<dbReference type="PaxDb" id="170187-SP_1416"/>
<dbReference type="EnsemblBacteria" id="AAK75514">
    <property type="protein sequence ID" value="AAK75514"/>
    <property type="gene ID" value="SP_1416"/>
</dbReference>
<dbReference type="KEGG" id="spn:SP_1416"/>
<dbReference type="eggNOG" id="COG0809">
    <property type="taxonomic scope" value="Bacteria"/>
</dbReference>
<dbReference type="PhylomeDB" id="Q97Q15"/>
<dbReference type="BioCyc" id="SPNE170187:G1FZB-1424-MONOMER"/>
<dbReference type="UniPathway" id="UPA00392"/>
<dbReference type="Proteomes" id="UP000000585">
    <property type="component" value="Chromosome"/>
</dbReference>
<dbReference type="GO" id="GO:0005737">
    <property type="term" value="C:cytoplasm"/>
    <property type="evidence" value="ECO:0007669"/>
    <property type="project" value="UniProtKB-SubCell"/>
</dbReference>
<dbReference type="GO" id="GO:0051075">
    <property type="term" value="F:S-adenosylmethionine:tRNA ribosyltransferase-isomerase activity"/>
    <property type="evidence" value="ECO:0007669"/>
    <property type="project" value="UniProtKB-EC"/>
</dbReference>
<dbReference type="GO" id="GO:0008616">
    <property type="term" value="P:queuosine biosynthetic process"/>
    <property type="evidence" value="ECO:0007669"/>
    <property type="project" value="UniProtKB-UniRule"/>
</dbReference>
<dbReference type="GO" id="GO:0002099">
    <property type="term" value="P:tRNA wobble guanine modification"/>
    <property type="evidence" value="ECO:0007669"/>
    <property type="project" value="TreeGrafter"/>
</dbReference>
<dbReference type="FunFam" id="2.40.10.240:FF:000002">
    <property type="entry name" value="S-adenosylmethionine:tRNA ribosyltransferase-isomerase"/>
    <property type="match status" value="1"/>
</dbReference>
<dbReference type="FunFam" id="3.40.1780.10:FF:000001">
    <property type="entry name" value="S-adenosylmethionine:tRNA ribosyltransferase-isomerase"/>
    <property type="match status" value="1"/>
</dbReference>
<dbReference type="Gene3D" id="2.40.10.240">
    <property type="entry name" value="QueA-like"/>
    <property type="match status" value="1"/>
</dbReference>
<dbReference type="Gene3D" id="3.40.1780.10">
    <property type="entry name" value="QueA-like"/>
    <property type="match status" value="1"/>
</dbReference>
<dbReference type="HAMAP" id="MF_00113">
    <property type="entry name" value="QueA"/>
    <property type="match status" value="1"/>
</dbReference>
<dbReference type="InterPro" id="IPR003699">
    <property type="entry name" value="QueA"/>
</dbReference>
<dbReference type="InterPro" id="IPR042118">
    <property type="entry name" value="QueA_dom1"/>
</dbReference>
<dbReference type="InterPro" id="IPR042119">
    <property type="entry name" value="QueA_dom2"/>
</dbReference>
<dbReference type="InterPro" id="IPR036100">
    <property type="entry name" value="QueA_sf"/>
</dbReference>
<dbReference type="NCBIfam" id="NF001140">
    <property type="entry name" value="PRK00147.1"/>
    <property type="match status" value="1"/>
</dbReference>
<dbReference type="NCBIfam" id="TIGR00113">
    <property type="entry name" value="queA"/>
    <property type="match status" value="1"/>
</dbReference>
<dbReference type="PANTHER" id="PTHR30307">
    <property type="entry name" value="S-ADENOSYLMETHIONINE:TRNA RIBOSYLTRANSFERASE-ISOMERASE"/>
    <property type="match status" value="1"/>
</dbReference>
<dbReference type="PANTHER" id="PTHR30307:SF0">
    <property type="entry name" value="S-ADENOSYLMETHIONINE:TRNA RIBOSYLTRANSFERASE-ISOMERASE"/>
    <property type="match status" value="1"/>
</dbReference>
<dbReference type="Pfam" id="PF02547">
    <property type="entry name" value="Queuosine_synth"/>
    <property type="match status" value="1"/>
</dbReference>
<dbReference type="SUPFAM" id="SSF111337">
    <property type="entry name" value="QueA-like"/>
    <property type="match status" value="1"/>
</dbReference>
<keyword id="KW-0963">Cytoplasm</keyword>
<keyword id="KW-0671">Queuosine biosynthesis</keyword>
<keyword id="KW-1185">Reference proteome</keyword>
<keyword id="KW-0949">S-adenosyl-L-methionine</keyword>
<keyword id="KW-0808">Transferase</keyword>
<organism>
    <name type="scientific">Streptococcus pneumoniae serotype 4 (strain ATCC BAA-334 / TIGR4)</name>
    <dbReference type="NCBI Taxonomy" id="170187"/>
    <lineage>
        <taxon>Bacteria</taxon>
        <taxon>Bacillati</taxon>
        <taxon>Bacillota</taxon>
        <taxon>Bacilli</taxon>
        <taxon>Lactobacillales</taxon>
        <taxon>Streptococcaceae</taxon>
        <taxon>Streptococcus</taxon>
    </lineage>
</organism>
<reference key="1">
    <citation type="journal article" date="2001" name="Science">
        <title>Complete genome sequence of a virulent isolate of Streptococcus pneumoniae.</title>
        <authorList>
            <person name="Tettelin H."/>
            <person name="Nelson K.E."/>
            <person name="Paulsen I.T."/>
            <person name="Eisen J.A."/>
            <person name="Read T.D."/>
            <person name="Peterson S.N."/>
            <person name="Heidelberg J.F."/>
            <person name="DeBoy R.T."/>
            <person name="Haft D.H."/>
            <person name="Dodson R.J."/>
            <person name="Durkin A.S."/>
            <person name="Gwinn M.L."/>
            <person name="Kolonay J.F."/>
            <person name="Nelson W.C."/>
            <person name="Peterson J.D."/>
            <person name="Umayam L.A."/>
            <person name="White O."/>
            <person name="Salzberg S.L."/>
            <person name="Lewis M.R."/>
            <person name="Radune D."/>
            <person name="Holtzapple E.K."/>
            <person name="Khouri H.M."/>
            <person name="Wolf A.M."/>
            <person name="Utterback T.R."/>
            <person name="Hansen C.L."/>
            <person name="McDonald L.A."/>
            <person name="Feldblyum T.V."/>
            <person name="Angiuoli S.V."/>
            <person name="Dickinson T."/>
            <person name="Hickey E.K."/>
            <person name="Holt I.E."/>
            <person name="Loftus B.J."/>
            <person name="Yang F."/>
            <person name="Smith H.O."/>
            <person name="Venter J.C."/>
            <person name="Dougherty B.A."/>
            <person name="Morrison D.A."/>
            <person name="Hollingshead S.K."/>
            <person name="Fraser C.M."/>
        </authorList>
    </citation>
    <scope>NUCLEOTIDE SEQUENCE [LARGE SCALE GENOMIC DNA]</scope>
    <source>
        <strain>ATCC BAA-334 / TIGR4</strain>
    </source>
</reference>
<evidence type="ECO:0000255" key="1">
    <source>
        <dbReference type="HAMAP-Rule" id="MF_00113"/>
    </source>
</evidence>
<name>QUEA_STRPN</name>
<feature type="chain" id="PRO_0000165449" description="S-adenosylmethionine:tRNA ribosyltransferase-isomerase">
    <location>
        <begin position="1"/>
        <end position="342"/>
    </location>
</feature>
<protein>
    <recommendedName>
        <fullName evidence="1">S-adenosylmethionine:tRNA ribosyltransferase-isomerase</fullName>
        <ecNumber evidence="1">2.4.99.17</ecNumber>
    </recommendedName>
    <alternativeName>
        <fullName evidence="1">Queuosine biosynthesis protein QueA</fullName>
    </alternativeName>
</protein>